<gene>
    <name evidence="1" type="primary">trpB</name>
    <name type="ordered locus">YPDSF_0929</name>
</gene>
<dbReference type="EC" id="4.2.1.20" evidence="1"/>
<dbReference type="EMBL" id="CP000668">
    <property type="protein sequence ID" value="ABP39329.1"/>
    <property type="molecule type" value="Genomic_DNA"/>
</dbReference>
<dbReference type="RefSeq" id="WP_002210633.1">
    <property type="nucleotide sequence ID" value="NZ_CP009715.1"/>
</dbReference>
<dbReference type="SMR" id="A4TJ67"/>
<dbReference type="GeneID" id="57976463"/>
<dbReference type="KEGG" id="ypp:YPDSF_0929"/>
<dbReference type="PATRIC" id="fig|386656.14.peg.2922"/>
<dbReference type="UniPathway" id="UPA00035">
    <property type="reaction ID" value="UER00044"/>
</dbReference>
<dbReference type="GO" id="GO:0005737">
    <property type="term" value="C:cytoplasm"/>
    <property type="evidence" value="ECO:0007669"/>
    <property type="project" value="TreeGrafter"/>
</dbReference>
<dbReference type="GO" id="GO:0004834">
    <property type="term" value="F:tryptophan synthase activity"/>
    <property type="evidence" value="ECO:0007669"/>
    <property type="project" value="UniProtKB-UniRule"/>
</dbReference>
<dbReference type="CDD" id="cd06446">
    <property type="entry name" value="Trp-synth_B"/>
    <property type="match status" value="1"/>
</dbReference>
<dbReference type="FunFam" id="3.40.50.1100:FF:000001">
    <property type="entry name" value="Tryptophan synthase beta chain"/>
    <property type="match status" value="1"/>
</dbReference>
<dbReference type="FunFam" id="3.40.50.1100:FF:000004">
    <property type="entry name" value="Tryptophan synthase beta chain"/>
    <property type="match status" value="1"/>
</dbReference>
<dbReference type="Gene3D" id="3.40.50.1100">
    <property type="match status" value="2"/>
</dbReference>
<dbReference type="HAMAP" id="MF_00133">
    <property type="entry name" value="Trp_synth_beta"/>
    <property type="match status" value="1"/>
</dbReference>
<dbReference type="InterPro" id="IPR006653">
    <property type="entry name" value="Trp_synth_b_CS"/>
</dbReference>
<dbReference type="InterPro" id="IPR006654">
    <property type="entry name" value="Trp_synth_beta"/>
</dbReference>
<dbReference type="InterPro" id="IPR023026">
    <property type="entry name" value="Trp_synth_beta/beta-like"/>
</dbReference>
<dbReference type="InterPro" id="IPR001926">
    <property type="entry name" value="TrpB-like_PALP"/>
</dbReference>
<dbReference type="InterPro" id="IPR036052">
    <property type="entry name" value="TrpB-like_PALP_sf"/>
</dbReference>
<dbReference type="NCBIfam" id="TIGR00263">
    <property type="entry name" value="trpB"/>
    <property type="match status" value="1"/>
</dbReference>
<dbReference type="PANTHER" id="PTHR48077:SF3">
    <property type="entry name" value="TRYPTOPHAN SYNTHASE"/>
    <property type="match status" value="1"/>
</dbReference>
<dbReference type="PANTHER" id="PTHR48077">
    <property type="entry name" value="TRYPTOPHAN SYNTHASE-RELATED"/>
    <property type="match status" value="1"/>
</dbReference>
<dbReference type="Pfam" id="PF00291">
    <property type="entry name" value="PALP"/>
    <property type="match status" value="1"/>
</dbReference>
<dbReference type="PIRSF" id="PIRSF001413">
    <property type="entry name" value="Trp_syn_beta"/>
    <property type="match status" value="1"/>
</dbReference>
<dbReference type="SUPFAM" id="SSF53686">
    <property type="entry name" value="Tryptophan synthase beta subunit-like PLP-dependent enzymes"/>
    <property type="match status" value="1"/>
</dbReference>
<dbReference type="PROSITE" id="PS00168">
    <property type="entry name" value="TRP_SYNTHASE_BETA"/>
    <property type="match status" value="1"/>
</dbReference>
<sequence>MTTLNPYFGEFGGMYVPQILVPALKQLEDAFVSAQLDPEFQAAFQDLLKNYAGRPTALTLCQNLTKGTKTKLYLKREDLLHGGAHKTNQVLGQALLAKRMGKTEIIAETGAGQHGVASALACALLGLKCRIYMGAKDIERQSPNVFRMRLMGAEVIPVHSGSSTLKDACNEALRDWSGTYETAHYMLGTAAGPHPYPTIVREFQRMIGEETKAQILEKEGRLPDAVLACVGGGSNAIGMFADFIDEPDVGLIGVEPAGLGIETGQHGAPLKHGKVGIYFGMKSPMMQTSDGQIEESYSISAGLDFPSVGPQHAYLNSIGRADYVSITDDEALDAFKTLSCKEGIIPALESSHALAHALKMIKADPDKEQILVVNLSGRGDKDIFTVHDILKARGEI</sequence>
<comment type="function">
    <text evidence="1">The beta subunit is responsible for the synthesis of L-tryptophan from indole and L-serine.</text>
</comment>
<comment type="catalytic activity">
    <reaction evidence="1">
        <text>(1S,2R)-1-C-(indol-3-yl)glycerol 3-phosphate + L-serine = D-glyceraldehyde 3-phosphate + L-tryptophan + H2O</text>
        <dbReference type="Rhea" id="RHEA:10532"/>
        <dbReference type="ChEBI" id="CHEBI:15377"/>
        <dbReference type="ChEBI" id="CHEBI:33384"/>
        <dbReference type="ChEBI" id="CHEBI:57912"/>
        <dbReference type="ChEBI" id="CHEBI:58866"/>
        <dbReference type="ChEBI" id="CHEBI:59776"/>
        <dbReference type="EC" id="4.2.1.20"/>
    </reaction>
</comment>
<comment type="cofactor">
    <cofactor evidence="1">
        <name>pyridoxal 5'-phosphate</name>
        <dbReference type="ChEBI" id="CHEBI:597326"/>
    </cofactor>
</comment>
<comment type="pathway">
    <text evidence="1">Amino-acid biosynthesis; L-tryptophan biosynthesis; L-tryptophan from chorismate: step 5/5.</text>
</comment>
<comment type="subunit">
    <text evidence="1">Tetramer of two alpha and two beta chains.</text>
</comment>
<comment type="similarity">
    <text evidence="1">Belongs to the TrpB family.</text>
</comment>
<feature type="chain" id="PRO_1000018427" description="Tryptophan synthase beta chain">
    <location>
        <begin position="1"/>
        <end position="396"/>
    </location>
</feature>
<feature type="modified residue" description="N6-(pyridoxal phosphate)lysine" evidence="1">
    <location>
        <position position="86"/>
    </location>
</feature>
<reference key="1">
    <citation type="submission" date="2007-02" db="EMBL/GenBank/DDBJ databases">
        <title>Complete sequence of chromosome of Yersinia pestis Pestoides F.</title>
        <authorList>
            <consortium name="US DOE Joint Genome Institute"/>
            <person name="Copeland A."/>
            <person name="Lucas S."/>
            <person name="Lapidus A."/>
            <person name="Barry K."/>
            <person name="Detter J.C."/>
            <person name="Glavina del Rio T."/>
            <person name="Hammon N."/>
            <person name="Israni S."/>
            <person name="Dalin E."/>
            <person name="Tice H."/>
            <person name="Pitluck S."/>
            <person name="Di Bartolo G."/>
            <person name="Chain P."/>
            <person name="Malfatti S."/>
            <person name="Shin M."/>
            <person name="Vergez L."/>
            <person name="Schmutz J."/>
            <person name="Larimer F."/>
            <person name="Land M."/>
            <person name="Hauser L."/>
            <person name="Worsham P."/>
            <person name="Chu M."/>
            <person name="Bearden S."/>
            <person name="Garcia E."/>
            <person name="Richardson P."/>
        </authorList>
    </citation>
    <scope>NUCLEOTIDE SEQUENCE [LARGE SCALE GENOMIC DNA]</scope>
    <source>
        <strain>Pestoides F</strain>
    </source>
</reference>
<organism>
    <name type="scientific">Yersinia pestis (strain Pestoides F)</name>
    <dbReference type="NCBI Taxonomy" id="386656"/>
    <lineage>
        <taxon>Bacteria</taxon>
        <taxon>Pseudomonadati</taxon>
        <taxon>Pseudomonadota</taxon>
        <taxon>Gammaproteobacteria</taxon>
        <taxon>Enterobacterales</taxon>
        <taxon>Yersiniaceae</taxon>
        <taxon>Yersinia</taxon>
    </lineage>
</organism>
<accession>A4TJ67</accession>
<keyword id="KW-0028">Amino-acid biosynthesis</keyword>
<keyword id="KW-0057">Aromatic amino acid biosynthesis</keyword>
<keyword id="KW-0456">Lyase</keyword>
<keyword id="KW-0663">Pyridoxal phosphate</keyword>
<keyword id="KW-0822">Tryptophan biosynthesis</keyword>
<evidence type="ECO:0000255" key="1">
    <source>
        <dbReference type="HAMAP-Rule" id="MF_00133"/>
    </source>
</evidence>
<name>TRPB_YERPP</name>
<protein>
    <recommendedName>
        <fullName evidence="1">Tryptophan synthase beta chain</fullName>
        <ecNumber evidence="1">4.2.1.20</ecNumber>
    </recommendedName>
</protein>
<proteinExistence type="inferred from homology"/>